<keyword id="KW-0249">Electron transport</keyword>
<keyword id="KW-0472">Membrane</keyword>
<keyword id="KW-0496">Mitochondrion</keyword>
<keyword id="KW-0999">Mitochondrion inner membrane</keyword>
<keyword id="KW-0520">NAD</keyword>
<keyword id="KW-1185">Reference proteome</keyword>
<keyword id="KW-0679">Respiratory chain</keyword>
<keyword id="KW-1278">Translocase</keyword>
<keyword id="KW-0812">Transmembrane</keyword>
<keyword id="KW-1133">Transmembrane helix</keyword>
<keyword id="KW-0813">Transport</keyword>
<keyword id="KW-0830">Ubiquinone</keyword>
<protein>
    <recommendedName>
        <fullName>NADH-ubiquinone oxidoreductase chain 5</fullName>
        <ecNumber evidence="1">7.1.1.2</ecNumber>
    </recommendedName>
    <alternativeName>
        <fullName>NADH dehydrogenase subunit 5</fullName>
    </alternativeName>
</protein>
<feature type="chain" id="PRO_0000118073" description="NADH-ubiquinone oxidoreductase chain 5">
    <location>
        <begin position="1"/>
        <end position="606"/>
    </location>
</feature>
<feature type="transmembrane region" description="Helical" evidence="3">
    <location>
        <begin position="1"/>
        <end position="21"/>
    </location>
</feature>
<feature type="transmembrane region" description="Helical" evidence="3">
    <location>
        <begin position="43"/>
        <end position="63"/>
    </location>
</feature>
<feature type="transmembrane region" description="Helical" evidence="3">
    <location>
        <begin position="87"/>
        <end position="107"/>
    </location>
</feature>
<feature type="transmembrane region" description="Helical" evidence="3">
    <location>
        <begin position="117"/>
        <end position="137"/>
    </location>
</feature>
<feature type="transmembrane region" description="Helical" evidence="3">
    <location>
        <begin position="140"/>
        <end position="160"/>
    </location>
</feature>
<feature type="transmembrane region" description="Helical" evidence="3">
    <location>
        <begin position="171"/>
        <end position="191"/>
    </location>
</feature>
<feature type="transmembrane region" description="Helical" evidence="3">
    <location>
        <begin position="201"/>
        <end position="221"/>
    </location>
</feature>
<feature type="transmembrane region" description="Helical" evidence="3">
    <location>
        <begin position="241"/>
        <end position="261"/>
    </location>
</feature>
<feature type="transmembrane region" description="Helical" evidence="3">
    <location>
        <begin position="273"/>
        <end position="293"/>
    </location>
</feature>
<feature type="transmembrane region" description="Helical" evidence="3">
    <location>
        <begin position="310"/>
        <end position="330"/>
    </location>
</feature>
<feature type="transmembrane region" description="Helical" evidence="3">
    <location>
        <begin position="365"/>
        <end position="385"/>
    </location>
</feature>
<feature type="transmembrane region" description="Helical" evidence="3">
    <location>
        <begin position="409"/>
        <end position="429"/>
    </location>
</feature>
<feature type="transmembrane region" description="Helical" evidence="3">
    <location>
        <begin position="457"/>
        <end position="477"/>
    </location>
</feature>
<feature type="transmembrane region" description="Helical" evidence="3">
    <location>
        <begin position="488"/>
        <end position="508"/>
    </location>
</feature>
<feature type="transmembrane region" description="Helical" evidence="3">
    <location>
        <begin position="582"/>
        <end position="602"/>
    </location>
</feature>
<feature type="sequence conflict" description="In Ref. 1; AAD04773." evidence="4" ref="1">
    <original>F</original>
    <variation>I</variation>
    <location>
        <position position="63"/>
    </location>
</feature>
<feature type="sequence conflict" description="In Ref. 1; AAD04773." evidence="4" ref="1">
    <original>N</original>
    <variation>D</variation>
    <location>
        <position position="83"/>
    </location>
</feature>
<feature type="sequence conflict" description="In Ref. 1; AAD04773." evidence="4" ref="1">
    <original>E</original>
    <variation>K</variation>
    <location>
        <position position="300"/>
    </location>
</feature>
<feature type="sequence conflict" description="In Ref. 1; AAD04773." evidence="4" ref="1">
    <original>S</original>
    <variation>A</variation>
    <location>
        <position position="303"/>
    </location>
</feature>
<feature type="sequence conflict" description="In Ref. 1; AAD04773." evidence="4" ref="1">
    <original>C</original>
    <variation>F</variation>
    <location>
        <position position="335"/>
    </location>
</feature>
<feature type="sequence conflict" description="In Ref. 1; AAD04773." evidence="4" ref="1">
    <original>I</original>
    <variation>T</variation>
    <location>
        <position position="495"/>
    </location>
</feature>
<feature type="sequence conflict" description="In Ref. 1; AAD04773." evidence="4" ref="1">
    <original>T</original>
    <variation>S</variation>
    <location>
        <position position="508"/>
    </location>
</feature>
<feature type="sequence conflict" description="In Ref. 1; AAD04773." evidence="4" ref="1">
    <original>E</original>
    <variation>G</variation>
    <location>
        <position position="606"/>
    </location>
</feature>
<dbReference type="EC" id="7.1.1.2" evidence="1"/>
<dbReference type="EMBL" id="U96639">
    <property type="protein sequence ID" value="AAD04773.2"/>
    <property type="molecule type" value="Genomic_DNA"/>
</dbReference>
<dbReference type="EMBL" id="AY729880">
    <property type="protein sequence ID" value="AAU12157.1"/>
    <property type="molecule type" value="Genomic_DNA"/>
</dbReference>
<dbReference type="PIR" id="T11503">
    <property type="entry name" value="T11503"/>
</dbReference>
<dbReference type="RefSeq" id="NP_008481.4">
    <property type="nucleotide sequence ID" value="NC_002008.4"/>
</dbReference>
<dbReference type="SMR" id="Q9ZZ57"/>
<dbReference type="FunCoup" id="Q9ZZ57">
    <property type="interactions" value="12"/>
</dbReference>
<dbReference type="STRING" id="9615.ENSCAFP00000030319"/>
<dbReference type="PaxDb" id="9612-ENSCAFP00000030319"/>
<dbReference type="GeneID" id="804484"/>
<dbReference type="KEGG" id="cfa:804484"/>
<dbReference type="CTD" id="4540"/>
<dbReference type="eggNOG" id="KOG4668">
    <property type="taxonomic scope" value="Eukaryota"/>
</dbReference>
<dbReference type="InParanoid" id="Q9ZZ57"/>
<dbReference type="Proteomes" id="UP000002254">
    <property type="component" value="Mitochondrion"/>
</dbReference>
<dbReference type="Proteomes" id="UP000694429">
    <property type="component" value="Unplaced"/>
</dbReference>
<dbReference type="Proteomes" id="UP000694542">
    <property type="component" value="Unassembled WGS sequence"/>
</dbReference>
<dbReference type="Proteomes" id="UP000805418">
    <property type="component" value="Mitochondrion MT"/>
</dbReference>
<dbReference type="GO" id="GO:0005743">
    <property type="term" value="C:mitochondrial inner membrane"/>
    <property type="evidence" value="ECO:0000250"/>
    <property type="project" value="UniProtKB"/>
</dbReference>
<dbReference type="GO" id="GO:0045271">
    <property type="term" value="C:respiratory chain complex I"/>
    <property type="evidence" value="ECO:0000318"/>
    <property type="project" value="GO_Central"/>
</dbReference>
<dbReference type="GO" id="GO:0008137">
    <property type="term" value="F:NADH dehydrogenase (ubiquinone) activity"/>
    <property type="evidence" value="ECO:0000250"/>
    <property type="project" value="UniProtKB"/>
</dbReference>
<dbReference type="GO" id="GO:0015990">
    <property type="term" value="P:electron transport coupled proton transport"/>
    <property type="evidence" value="ECO:0000318"/>
    <property type="project" value="GO_Central"/>
</dbReference>
<dbReference type="GO" id="GO:0006120">
    <property type="term" value="P:mitochondrial electron transport, NADH to ubiquinone"/>
    <property type="evidence" value="ECO:0000250"/>
    <property type="project" value="UniProtKB"/>
</dbReference>
<dbReference type="GO" id="GO:0032981">
    <property type="term" value="P:mitochondrial respiratory chain complex I assembly"/>
    <property type="evidence" value="ECO:0000250"/>
    <property type="project" value="UniProtKB"/>
</dbReference>
<dbReference type="InterPro" id="IPR010934">
    <property type="entry name" value="NADH_DH_su5_C"/>
</dbReference>
<dbReference type="InterPro" id="IPR018393">
    <property type="entry name" value="NADHpl_OxRdtase_5_subgr"/>
</dbReference>
<dbReference type="InterPro" id="IPR001750">
    <property type="entry name" value="ND/Mrp_TM"/>
</dbReference>
<dbReference type="InterPro" id="IPR003945">
    <property type="entry name" value="NU5C-like"/>
</dbReference>
<dbReference type="InterPro" id="IPR001516">
    <property type="entry name" value="Proton_antipo_N"/>
</dbReference>
<dbReference type="NCBIfam" id="TIGR01974">
    <property type="entry name" value="NDH_I_L"/>
    <property type="match status" value="1"/>
</dbReference>
<dbReference type="PANTHER" id="PTHR42829">
    <property type="entry name" value="NADH-UBIQUINONE OXIDOREDUCTASE CHAIN 5"/>
    <property type="match status" value="1"/>
</dbReference>
<dbReference type="PANTHER" id="PTHR42829:SF2">
    <property type="entry name" value="NADH-UBIQUINONE OXIDOREDUCTASE CHAIN 5"/>
    <property type="match status" value="1"/>
</dbReference>
<dbReference type="Pfam" id="PF06455">
    <property type="entry name" value="NADH5_C"/>
    <property type="match status" value="1"/>
</dbReference>
<dbReference type="Pfam" id="PF00361">
    <property type="entry name" value="Proton_antipo_M"/>
    <property type="match status" value="1"/>
</dbReference>
<dbReference type="Pfam" id="PF00662">
    <property type="entry name" value="Proton_antipo_N"/>
    <property type="match status" value="1"/>
</dbReference>
<dbReference type="PRINTS" id="PR01434">
    <property type="entry name" value="NADHDHGNASE5"/>
</dbReference>
<accession>Q9ZZ57</accession>
<accession>Q66QB1</accession>
<comment type="function">
    <text evidence="1">Core subunit of the mitochondrial membrane respiratory chain NADH dehydrogenase (Complex I) which catalyzes electron transfer from NADH through the respiratory chain, using ubiquinone as an electron acceptor. Essential for the catalytic activity and assembly of complex I.</text>
</comment>
<comment type="catalytic activity">
    <reaction evidence="1">
        <text>a ubiquinone + NADH + 5 H(+)(in) = a ubiquinol + NAD(+) + 4 H(+)(out)</text>
        <dbReference type="Rhea" id="RHEA:29091"/>
        <dbReference type="Rhea" id="RHEA-COMP:9565"/>
        <dbReference type="Rhea" id="RHEA-COMP:9566"/>
        <dbReference type="ChEBI" id="CHEBI:15378"/>
        <dbReference type="ChEBI" id="CHEBI:16389"/>
        <dbReference type="ChEBI" id="CHEBI:17976"/>
        <dbReference type="ChEBI" id="CHEBI:57540"/>
        <dbReference type="ChEBI" id="CHEBI:57945"/>
        <dbReference type="EC" id="7.1.1.2"/>
    </reaction>
</comment>
<comment type="subunit">
    <text evidence="2">Core subunit of respiratory chain NADH dehydrogenase (Complex I) which is composed of 45 different subunits.</text>
</comment>
<comment type="subcellular location">
    <subcellularLocation>
        <location evidence="2">Mitochondrion inner membrane</location>
        <topology evidence="3">Multi-pass membrane protein</topology>
    </subcellularLocation>
</comment>
<comment type="similarity">
    <text evidence="4">Belongs to the complex I subunit 5 family.</text>
</comment>
<geneLocation type="mitochondrion"/>
<gene>
    <name type="primary">MT-ND5</name>
    <name type="synonym">MTND5</name>
    <name type="synonym">NADH5</name>
    <name type="synonym">ND5</name>
</gene>
<evidence type="ECO:0000250" key="1">
    <source>
        <dbReference type="UniProtKB" id="P03915"/>
    </source>
</evidence>
<evidence type="ECO:0000250" key="2">
    <source>
        <dbReference type="UniProtKB" id="P03920"/>
    </source>
</evidence>
<evidence type="ECO:0000255" key="3"/>
<evidence type="ECO:0000305" key="4"/>
<evidence type="ECO:0000312" key="5">
    <source>
        <dbReference type="Proteomes" id="UP000002254"/>
    </source>
</evidence>
<reference key="1">
    <citation type="journal article" date="1998" name="Mol. Phylogenet. Evol.">
        <title>The complete nucleotide sequence of the domestic dog (Canis familiaris) mitochondrial genome.</title>
        <authorList>
            <person name="Kim K.S."/>
            <person name="Lee S.E."/>
            <person name="Jeong H.W."/>
            <person name="Ha J.H."/>
        </authorList>
    </citation>
    <scope>NUCLEOTIDE SEQUENCE [GENOMIC DNA]</scope>
    <source>
        <strain evidence="5">Boxer</strain>
    </source>
</reference>
<reference key="2">
    <citation type="submission" date="2000-04" db="EMBL/GenBank/DDBJ databases">
        <authorList>
            <person name="Kim K.S."/>
            <person name="Lee S.E."/>
            <person name="Jeong H.W."/>
            <person name="Jeong S.Y."/>
            <person name="Sohn H.S."/>
            <person name="Ha J.H."/>
        </authorList>
    </citation>
    <scope>SEQUENCE REVISION TO 117; 134; 201; 401 AND 405</scope>
</reference>
<reference key="3">
    <citation type="submission" date="2004-08" db="EMBL/GenBank/DDBJ databases">
        <title>The complete mitochondrial DNA sequence of the Beagle dog (Canis familiaris).</title>
        <authorList>
            <person name="Zhu S."/>
            <person name="Xu Q."/>
            <person name="Chang H."/>
        </authorList>
    </citation>
    <scope>NUCLEOTIDE SEQUENCE [GENOMIC DNA]</scope>
    <source>
        <strain>Beagle</strain>
    </source>
</reference>
<organism>
    <name type="scientific">Canis lupus familiaris</name>
    <name type="common">Dog</name>
    <name type="synonym">Canis familiaris</name>
    <dbReference type="NCBI Taxonomy" id="9615"/>
    <lineage>
        <taxon>Eukaryota</taxon>
        <taxon>Metazoa</taxon>
        <taxon>Chordata</taxon>
        <taxon>Craniata</taxon>
        <taxon>Vertebrata</taxon>
        <taxon>Euteleostomi</taxon>
        <taxon>Mammalia</taxon>
        <taxon>Eutheria</taxon>
        <taxon>Laurasiatheria</taxon>
        <taxon>Carnivora</taxon>
        <taxon>Caniformia</taxon>
        <taxon>Canidae</taxon>
        <taxon>Canis</taxon>
    </lineage>
</organism>
<sequence>MNMFSSCMITALVILTLPIIMSSTKLYKNKLYPYYVKTATSYAFMISMIPTMMFIYSGQETIFSNWHWMTIQTMKLSMSFKLNYFSMIFVPVALFVTWSIMEFSMWYMHSDPYINRFFKYLLLFLITMMVLVTANNMFQLFIGWEGVGIMSFLLIGWWYGRTDANTAALQAVLYNRIGDVGFIMTMAWFLLNLNTWDLQQIFITTNDNFNLPLLGLLLAATGKSAQFGLHPWLPSAMEGPTPVSALLHSSTMVVAGVFLLIRFHPLMEHNQTIQTLTLCLGAITTLFTAICALTQNDIKEIVSFSTSSQLGLMMVTIGINQPYLAFLHICTHAFCKAMLFMCSGSVIHSLNDEQDIRKMGGLFKVLPFTTTSLIIGSLALTGMPFLTGFYSKDLIIESANTSNTNAWALLITLVATSLTAAYSTRIMFFALLGQPRFSPMILINENNPLLINSIKRLLIGSVFAGYIISHSITPTTIPQMTMPHYLKMTALAVTILGFILALELNLTTQGLKFNYPSNYFKFSSLLGYYPTIMHRLTPKTSLTISQKSASMLLDSIWLENILPKSISYFQMKSSTLISNQKGLIKLYFLSFMLTMILSLLILNYHE</sequence>
<proteinExistence type="inferred from homology"/>
<name>NU5M_CANLF</name>